<proteinExistence type="evidence at protein level"/>
<comment type="function">
    <text evidence="1 3">Involved in viral genome packaging through its interaction with packaging proteins 1 and 2. After proteolytic cleavage by adenovirus protease, L1 52/55k protein is removed from the capsid during viral maturation.</text>
</comment>
<comment type="subunit">
    <text evidence="1 3 4 5">Part of the genome packaging complex composed of packaging proteins 1, 2 and 3; this complex specifically binds to the packaging sequence on the left end of viral genomic DNA and performs packaging of the viral genome (PubMed:22811519). Interacts with hexon-linking protein IIIa; this interaction is required to promote correct genome packaging (PubMed:21632753).</text>
</comment>
<comment type="subcellular location">
    <subcellularLocation>
        <location evidence="1">Host nucleus</location>
    </subcellularLocation>
    <text evidence="1">Nuclear protein present in empty capsids and assembly intermediates.</text>
</comment>
<comment type="induction">
    <text evidence="1">Expressed in the early phase and late phase of the viral replicative cycle.</text>
</comment>
<comment type="PTM">
    <text evidence="1">Cleaved at different sites by the viral protease during virion maturation.</text>
</comment>
<comment type="miscellaneous">
    <text evidence="1">All late proteins expressed from the major late promoter are produced by alternative splicing and alternative polyadenylation of the same gene giving rise to non-overlapping ORFs. A leader sequence is present in the N-terminus of all these mRNAs and is recognized by the viral shutoff protein to provide expression although conventional translation via ribosome scanning from the cap has been shut off in the host cell.</text>
</comment>
<comment type="similarity">
    <text evidence="1">Belongs to the adenoviridae packaging protein 3 family.</text>
</comment>
<reference key="1">
    <citation type="journal article" date="1992" name="Virology">
        <title>The sequence of the genome of adenovirus type 5 and its comparison with the genome of adenovirus type 2.</title>
        <authorList>
            <person name="Chroboczek J."/>
            <person name="Bieber F."/>
            <person name="Jacrot B."/>
        </authorList>
    </citation>
    <scope>NUCLEOTIDE SEQUENCE [GENOMIC DNA]</scope>
</reference>
<reference key="2">
    <citation type="journal article" date="2012" name="Nat. Methods">
        <title>De novo derivation of proteomes from transcriptomes for transcript and protein identification.</title>
        <authorList>
            <person name="Evans V.C."/>
            <person name="Barker G."/>
            <person name="Heesom K.J."/>
            <person name="Fan J."/>
            <person name="Bessant C."/>
            <person name="Matthews D.A."/>
        </authorList>
    </citation>
    <scope>NUCLEOTIDE SEQUENCE [MRNA]</scope>
</reference>
<reference key="3">
    <citation type="journal article" date="1984" name="Gene">
        <title>The nucleotide sequence of fragment HindIII-C of human adenovirus type 5 DNA (map positions 17.1-31.7).</title>
        <authorList>
            <person name="Dekker B.M.M."/>
            <person name="van Ormondt H."/>
        </authorList>
    </citation>
    <scope>NUCLEOTIDE SEQUENCE [GENOMIC DNA] OF 1-173</scope>
</reference>
<reference key="4">
    <citation type="journal article" date="2005" name="J. Virol.">
        <title>Analysis of the interaction of the adenovirus L1 52/55-kilodalton and IVa2 proteins with the packaging sequence in vivo and in vitro.</title>
        <authorList>
            <person name="Perez-Romero P."/>
            <person name="Tyler R.E."/>
            <person name="Abend J.R."/>
            <person name="Dus M."/>
            <person name="Imperiale M.J."/>
        </authorList>
    </citation>
    <scope>FUNCTION</scope>
    <scope>INTERACTION WITH PACKAGING PROTEIN 1</scope>
</reference>
<reference key="5">
    <citation type="journal article" date="2011" name="J. Virol.">
        <title>Adenovirus structural protein IIIa is involved in the serotype specificity of viral DNA packaging.</title>
        <authorList>
            <person name="Ma H.C."/>
            <person name="Hearing P."/>
        </authorList>
    </citation>
    <scope>INTERACTION WITH HEXON-LINKING PROTEIN IIIA PROTEIN</scope>
</reference>
<reference key="6">
    <citation type="journal article" date="2012" name="J. Virol.">
        <title>The adenovirus L4-22K Protein is multifunctional and is an integral component of crucial aspects of infection.</title>
        <authorList>
            <person name="Wu K."/>
            <person name="Orozco D."/>
            <person name="Hearing P."/>
        </authorList>
    </citation>
    <scope>IDENTIFICATION IN THE GENOME PACKAGING COMPLEX</scope>
</reference>
<protein>
    <recommendedName>
        <fullName evidence="1">Packaging protein 3</fullName>
    </recommendedName>
    <alternativeName>
        <fullName evidence="1">L1-52/55 kDa protein</fullName>
    </alternativeName>
    <alternativeName>
        <fullName evidence="1">Packaging protein 52K</fullName>
    </alternativeName>
</protein>
<organismHost>
    <name type="scientific">Homo sapiens</name>
    <name type="common">Human</name>
    <dbReference type="NCBI Taxonomy" id="9606"/>
</organismHost>
<feature type="chain" id="PRO_0000221866" description="Packaging protein 3">
    <location>
        <begin position="1"/>
        <end position="415"/>
    </location>
</feature>
<feature type="region of interest" description="Interaction with packaging protein 1" evidence="1">
    <location>
        <begin position="1"/>
        <end position="173"/>
    </location>
</feature>
<feature type="region of interest" description="Disordered" evidence="2">
    <location>
        <begin position="1"/>
        <end position="55"/>
    </location>
</feature>
<feature type="region of interest" description="Disordered" evidence="2">
    <location>
        <begin position="381"/>
        <end position="415"/>
    </location>
</feature>
<feature type="compositionally biased region" description="Low complexity" evidence="2">
    <location>
        <begin position="381"/>
        <end position="394"/>
    </location>
</feature>
<feature type="compositionally biased region" description="Acidic residues" evidence="2">
    <location>
        <begin position="400"/>
        <end position="415"/>
    </location>
</feature>
<feature type="site" description="Cleavage; by viral protease" evidence="1">
    <location>
        <begin position="351"/>
        <end position="352"/>
    </location>
</feature>
<feature type="modified residue" description="Phosphoserine; by host" evidence="1">
    <location>
        <position position="75"/>
    </location>
</feature>
<feature type="modified residue" description="Phosphoserine; by host" evidence="1">
    <location>
        <position position="360"/>
    </location>
</feature>
<feature type="sequence conflict" description="In Ref. 2; no nucleotide entry." ref="2">
    <original>Y</original>
    <variation>H</variation>
    <location>
        <position position="79"/>
    </location>
</feature>
<name>PKG3_ADE05</name>
<accession>P04496</accession>
<gene>
    <name evidence="1" type="primary">L1</name>
</gene>
<keyword id="KW-1048">Host nucleus</keyword>
<keyword id="KW-0426">Late protein</keyword>
<keyword id="KW-0597">Phosphoprotein</keyword>
<keyword id="KW-1185">Reference proteome</keyword>
<keyword id="KW-0231">Viral genome packaging</keyword>
<keyword id="KW-1188">Viral release from host cell</keyword>
<dbReference type="EMBL" id="M73260">
    <property type="protein sequence ID" value="AAA96406.1"/>
    <property type="molecule type" value="Genomic_DNA"/>
</dbReference>
<dbReference type="EMBL" id="X02996">
    <property type="protein sequence ID" value="CAA26751.1"/>
    <property type="molecule type" value="Genomic_DNA"/>
</dbReference>
<dbReference type="PIR" id="G39449">
    <property type="entry name" value="WMAD65"/>
</dbReference>
<dbReference type="RefSeq" id="AP_000204.1">
    <property type="nucleotide sequence ID" value="AC_000008.1"/>
</dbReference>
<dbReference type="SMR" id="P04496"/>
<dbReference type="Proteomes" id="UP000004992">
    <property type="component" value="Genome"/>
</dbReference>
<dbReference type="GO" id="GO:0042025">
    <property type="term" value="C:host cell nucleus"/>
    <property type="evidence" value="ECO:0007669"/>
    <property type="project" value="UniProtKB-SubCell"/>
</dbReference>
<dbReference type="GO" id="GO:0019073">
    <property type="term" value="P:viral DNA genome packaging"/>
    <property type="evidence" value="ECO:0000314"/>
    <property type="project" value="UniProtKB"/>
</dbReference>
<dbReference type="GO" id="GO:0019076">
    <property type="term" value="P:viral release from host cell"/>
    <property type="evidence" value="ECO:0007669"/>
    <property type="project" value="UniProtKB-UniRule"/>
</dbReference>
<dbReference type="HAMAP" id="MF_04058">
    <property type="entry name" value="ADV_PKG3"/>
    <property type="match status" value="1"/>
</dbReference>
<dbReference type="InterPro" id="IPR037536">
    <property type="entry name" value="ADV_PKG3"/>
</dbReference>
<dbReference type="InterPro" id="IPR004292">
    <property type="entry name" value="L1-like"/>
</dbReference>
<dbReference type="Pfam" id="PF03052">
    <property type="entry name" value="Adeno_52K"/>
    <property type="match status" value="1"/>
</dbReference>
<organism>
    <name type="scientific">Human adenovirus C serotype 5</name>
    <name type="common">HAdV-5</name>
    <name type="synonym">Human adenovirus 5</name>
    <dbReference type="NCBI Taxonomy" id="28285"/>
    <lineage>
        <taxon>Viruses</taxon>
        <taxon>Varidnaviria</taxon>
        <taxon>Bamfordvirae</taxon>
        <taxon>Preplasmiviricota</taxon>
        <taxon>Tectiliviricetes</taxon>
        <taxon>Rowavirales</taxon>
        <taxon>Adenoviridae</taxon>
        <taxon>Mastadenovirus</taxon>
        <taxon>Human mastadenovirus C</taxon>
    </lineage>
</organism>
<sequence length="415" mass="47060">MHPVLRQMRPPPQQRQEQEQRQTCRAPSPPPTASGGATSAVDAAADGDYEPPRRRARHYLDLEEGEGLARLGAPSPERYPRVQLKRDTREAYVPRQNLFRDREGEEPEEMRDRKFHAGRELRHGLNRERLLREEDFEPDARTGISPARAHVAAADLVTAYEQTVNQEINFQKSFNNHVRTLVAREEVAIGLMHLWDFVSALEQNPNSKPLMAQLFLIVQHSRDNEAFRDALLNIVEPEGRWLLDLINILQSIVVQERSLSLADKVAAINYSMLSLGKFYARKIYHTPYVPIDKEVKIEGFYMRMALKVLTLSDDLGVYRNERIHKAVSVSRRRELSDRELMHSLQRALAGTGSGDREAESYFDAGADLRWAPSRRALEAAGAGPGLAVAPARAGNVGGVEEYDEDDEYEPEDGEY</sequence>
<evidence type="ECO:0000255" key="1">
    <source>
        <dbReference type="HAMAP-Rule" id="MF_04058"/>
    </source>
</evidence>
<evidence type="ECO:0000256" key="2">
    <source>
        <dbReference type="SAM" id="MobiDB-lite"/>
    </source>
</evidence>
<evidence type="ECO:0000269" key="3">
    <source>
    </source>
</evidence>
<evidence type="ECO:0000269" key="4">
    <source>
    </source>
</evidence>
<evidence type="ECO:0000269" key="5">
    <source>
    </source>
</evidence>